<gene>
    <name evidence="1" type="primary">glpK</name>
    <name type="ordered locus">cgR_2778</name>
</gene>
<organism>
    <name type="scientific">Corynebacterium glutamicum (strain R)</name>
    <dbReference type="NCBI Taxonomy" id="340322"/>
    <lineage>
        <taxon>Bacteria</taxon>
        <taxon>Bacillati</taxon>
        <taxon>Actinomycetota</taxon>
        <taxon>Actinomycetes</taxon>
        <taxon>Mycobacteriales</taxon>
        <taxon>Corynebacteriaceae</taxon>
        <taxon>Corynebacterium</taxon>
    </lineage>
</organism>
<accession>A4QHT1</accession>
<proteinExistence type="inferred from homology"/>
<feature type="chain" id="PRO_1000020724" description="Glycerol kinase">
    <location>
        <begin position="1"/>
        <end position="509"/>
    </location>
</feature>
<feature type="binding site" evidence="1">
    <location>
        <position position="17"/>
    </location>
    <ligand>
        <name>ADP</name>
        <dbReference type="ChEBI" id="CHEBI:456216"/>
    </ligand>
</feature>
<feature type="binding site" evidence="1">
    <location>
        <position position="17"/>
    </location>
    <ligand>
        <name>ATP</name>
        <dbReference type="ChEBI" id="CHEBI:30616"/>
    </ligand>
</feature>
<feature type="binding site" evidence="1">
    <location>
        <position position="17"/>
    </location>
    <ligand>
        <name>sn-glycerol 3-phosphate</name>
        <dbReference type="ChEBI" id="CHEBI:57597"/>
    </ligand>
</feature>
<feature type="binding site" evidence="1">
    <location>
        <position position="18"/>
    </location>
    <ligand>
        <name>ATP</name>
        <dbReference type="ChEBI" id="CHEBI:30616"/>
    </ligand>
</feature>
<feature type="binding site" evidence="1">
    <location>
        <position position="19"/>
    </location>
    <ligand>
        <name>ATP</name>
        <dbReference type="ChEBI" id="CHEBI:30616"/>
    </ligand>
</feature>
<feature type="binding site" evidence="1">
    <location>
        <position position="21"/>
    </location>
    <ligand>
        <name>ADP</name>
        <dbReference type="ChEBI" id="CHEBI:456216"/>
    </ligand>
</feature>
<feature type="binding site" evidence="1">
    <location>
        <position position="87"/>
    </location>
    <ligand>
        <name>glycerol</name>
        <dbReference type="ChEBI" id="CHEBI:17754"/>
    </ligand>
</feature>
<feature type="binding site" evidence="1">
    <location>
        <position position="87"/>
    </location>
    <ligand>
        <name>sn-glycerol 3-phosphate</name>
        <dbReference type="ChEBI" id="CHEBI:57597"/>
    </ligand>
</feature>
<feature type="binding site" evidence="1">
    <location>
        <position position="88"/>
    </location>
    <ligand>
        <name>glycerol</name>
        <dbReference type="ChEBI" id="CHEBI:17754"/>
    </ligand>
</feature>
<feature type="binding site" evidence="1">
    <location>
        <position position="88"/>
    </location>
    <ligand>
        <name>sn-glycerol 3-phosphate</name>
        <dbReference type="ChEBI" id="CHEBI:57597"/>
    </ligand>
</feature>
<feature type="binding site" evidence="1">
    <location>
        <position position="139"/>
    </location>
    <ligand>
        <name>glycerol</name>
        <dbReference type="ChEBI" id="CHEBI:17754"/>
    </ligand>
</feature>
<feature type="binding site" evidence="1">
    <location>
        <position position="139"/>
    </location>
    <ligand>
        <name>sn-glycerol 3-phosphate</name>
        <dbReference type="ChEBI" id="CHEBI:57597"/>
    </ligand>
</feature>
<feature type="binding site" evidence="1">
    <location>
        <position position="256"/>
    </location>
    <ligand>
        <name>glycerol</name>
        <dbReference type="ChEBI" id="CHEBI:17754"/>
    </ligand>
</feature>
<feature type="binding site" evidence="1">
    <location>
        <position position="256"/>
    </location>
    <ligand>
        <name>sn-glycerol 3-phosphate</name>
        <dbReference type="ChEBI" id="CHEBI:57597"/>
    </ligand>
</feature>
<feature type="binding site" evidence="1">
    <location>
        <position position="257"/>
    </location>
    <ligand>
        <name>glycerol</name>
        <dbReference type="ChEBI" id="CHEBI:17754"/>
    </ligand>
</feature>
<feature type="binding site" evidence="1">
    <location>
        <position position="278"/>
    </location>
    <ligand>
        <name>ADP</name>
        <dbReference type="ChEBI" id="CHEBI:456216"/>
    </ligand>
</feature>
<feature type="binding site" evidence="1">
    <location>
        <position position="278"/>
    </location>
    <ligand>
        <name>ATP</name>
        <dbReference type="ChEBI" id="CHEBI:30616"/>
    </ligand>
</feature>
<feature type="binding site" evidence="1">
    <location>
        <position position="322"/>
    </location>
    <ligand>
        <name>ADP</name>
        <dbReference type="ChEBI" id="CHEBI:456216"/>
    </ligand>
</feature>
<feature type="binding site" evidence="1">
    <location>
        <position position="322"/>
    </location>
    <ligand>
        <name>ATP</name>
        <dbReference type="ChEBI" id="CHEBI:30616"/>
    </ligand>
</feature>
<feature type="binding site" evidence="1">
    <location>
        <position position="326"/>
    </location>
    <ligand>
        <name>ATP</name>
        <dbReference type="ChEBI" id="CHEBI:30616"/>
    </ligand>
</feature>
<feature type="binding site" evidence="1">
    <location>
        <position position="423"/>
    </location>
    <ligand>
        <name>ADP</name>
        <dbReference type="ChEBI" id="CHEBI:456216"/>
    </ligand>
</feature>
<feature type="binding site" evidence="1">
    <location>
        <position position="423"/>
    </location>
    <ligand>
        <name>ATP</name>
        <dbReference type="ChEBI" id="CHEBI:30616"/>
    </ligand>
</feature>
<feature type="binding site" evidence="1">
    <location>
        <position position="427"/>
    </location>
    <ligand>
        <name>ADP</name>
        <dbReference type="ChEBI" id="CHEBI:456216"/>
    </ligand>
</feature>
<comment type="function">
    <text evidence="1">Key enzyme in the regulation of glycerol uptake and metabolism. Catalyzes the phosphorylation of glycerol to yield sn-glycerol 3-phosphate.</text>
</comment>
<comment type="catalytic activity">
    <reaction evidence="1">
        <text>glycerol + ATP = sn-glycerol 3-phosphate + ADP + H(+)</text>
        <dbReference type="Rhea" id="RHEA:21644"/>
        <dbReference type="ChEBI" id="CHEBI:15378"/>
        <dbReference type="ChEBI" id="CHEBI:17754"/>
        <dbReference type="ChEBI" id="CHEBI:30616"/>
        <dbReference type="ChEBI" id="CHEBI:57597"/>
        <dbReference type="ChEBI" id="CHEBI:456216"/>
        <dbReference type="EC" id="2.7.1.30"/>
    </reaction>
</comment>
<comment type="activity regulation">
    <text evidence="1">Inhibited by fructose 1,6-bisphosphate (FBP).</text>
</comment>
<comment type="pathway">
    <text evidence="1">Polyol metabolism; glycerol degradation via glycerol kinase pathway; sn-glycerol 3-phosphate from glycerol: step 1/1.</text>
</comment>
<comment type="similarity">
    <text evidence="1">Belongs to the FGGY kinase family.</text>
</comment>
<dbReference type="EC" id="2.7.1.30" evidence="1"/>
<dbReference type="EMBL" id="AP009044">
    <property type="protein sequence ID" value="BAF55797.1"/>
    <property type="molecule type" value="Genomic_DNA"/>
</dbReference>
<dbReference type="RefSeq" id="WP_003857839.1">
    <property type="nucleotide sequence ID" value="NC_009342.1"/>
</dbReference>
<dbReference type="SMR" id="A4QHT1"/>
<dbReference type="GeneID" id="1020833"/>
<dbReference type="KEGG" id="cgt:cgR_2778"/>
<dbReference type="HOGENOM" id="CLU_009281_2_3_11"/>
<dbReference type="PhylomeDB" id="A4QHT1"/>
<dbReference type="UniPathway" id="UPA00618">
    <property type="reaction ID" value="UER00672"/>
</dbReference>
<dbReference type="Proteomes" id="UP000006698">
    <property type="component" value="Chromosome"/>
</dbReference>
<dbReference type="GO" id="GO:0005829">
    <property type="term" value="C:cytosol"/>
    <property type="evidence" value="ECO:0007669"/>
    <property type="project" value="TreeGrafter"/>
</dbReference>
<dbReference type="GO" id="GO:0005524">
    <property type="term" value="F:ATP binding"/>
    <property type="evidence" value="ECO:0007669"/>
    <property type="project" value="UniProtKB-UniRule"/>
</dbReference>
<dbReference type="GO" id="GO:0004370">
    <property type="term" value="F:glycerol kinase activity"/>
    <property type="evidence" value="ECO:0000250"/>
    <property type="project" value="UniProtKB"/>
</dbReference>
<dbReference type="GO" id="GO:0019563">
    <property type="term" value="P:glycerol catabolic process"/>
    <property type="evidence" value="ECO:0007669"/>
    <property type="project" value="UniProtKB-UniRule"/>
</dbReference>
<dbReference type="GO" id="GO:0006071">
    <property type="term" value="P:glycerol metabolic process"/>
    <property type="evidence" value="ECO:0000250"/>
    <property type="project" value="UniProtKB"/>
</dbReference>
<dbReference type="GO" id="GO:0006072">
    <property type="term" value="P:glycerol-3-phosphate metabolic process"/>
    <property type="evidence" value="ECO:0007669"/>
    <property type="project" value="InterPro"/>
</dbReference>
<dbReference type="CDD" id="cd07769">
    <property type="entry name" value="ASKHA_NBD_FGGY_GK"/>
    <property type="match status" value="1"/>
</dbReference>
<dbReference type="FunFam" id="3.30.420.40:FF:000007">
    <property type="entry name" value="Glycerol kinase"/>
    <property type="match status" value="1"/>
</dbReference>
<dbReference type="FunFam" id="3.30.420.40:FF:000008">
    <property type="entry name" value="Glycerol kinase"/>
    <property type="match status" value="1"/>
</dbReference>
<dbReference type="Gene3D" id="3.30.420.40">
    <property type="match status" value="2"/>
</dbReference>
<dbReference type="HAMAP" id="MF_00186">
    <property type="entry name" value="Glycerol_kin"/>
    <property type="match status" value="1"/>
</dbReference>
<dbReference type="InterPro" id="IPR043129">
    <property type="entry name" value="ATPase_NBD"/>
</dbReference>
<dbReference type="InterPro" id="IPR000577">
    <property type="entry name" value="Carb_kinase_FGGY"/>
</dbReference>
<dbReference type="InterPro" id="IPR018483">
    <property type="entry name" value="Carb_kinase_FGGY_CS"/>
</dbReference>
<dbReference type="InterPro" id="IPR018485">
    <property type="entry name" value="FGGY_C"/>
</dbReference>
<dbReference type="InterPro" id="IPR018484">
    <property type="entry name" value="FGGY_N"/>
</dbReference>
<dbReference type="InterPro" id="IPR005999">
    <property type="entry name" value="Glycerol_kin"/>
</dbReference>
<dbReference type="NCBIfam" id="TIGR01311">
    <property type="entry name" value="glycerol_kin"/>
    <property type="match status" value="1"/>
</dbReference>
<dbReference type="NCBIfam" id="NF000756">
    <property type="entry name" value="PRK00047.1"/>
    <property type="match status" value="1"/>
</dbReference>
<dbReference type="PANTHER" id="PTHR10196:SF69">
    <property type="entry name" value="GLYCEROL KINASE"/>
    <property type="match status" value="1"/>
</dbReference>
<dbReference type="PANTHER" id="PTHR10196">
    <property type="entry name" value="SUGAR KINASE"/>
    <property type="match status" value="1"/>
</dbReference>
<dbReference type="Pfam" id="PF02782">
    <property type="entry name" value="FGGY_C"/>
    <property type="match status" value="1"/>
</dbReference>
<dbReference type="Pfam" id="PF00370">
    <property type="entry name" value="FGGY_N"/>
    <property type="match status" value="1"/>
</dbReference>
<dbReference type="PIRSF" id="PIRSF000538">
    <property type="entry name" value="GlpK"/>
    <property type="match status" value="1"/>
</dbReference>
<dbReference type="SUPFAM" id="SSF53067">
    <property type="entry name" value="Actin-like ATPase domain"/>
    <property type="match status" value="2"/>
</dbReference>
<dbReference type="PROSITE" id="PS00933">
    <property type="entry name" value="FGGY_KINASES_1"/>
    <property type="match status" value="1"/>
</dbReference>
<dbReference type="PROSITE" id="PS00445">
    <property type="entry name" value="FGGY_KINASES_2"/>
    <property type="match status" value="1"/>
</dbReference>
<name>GLPK_CORGB</name>
<evidence type="ECO:0000255" key="1">
    <source>
        <dbReference type="HAMAP-Rule" id="MF_00186"/>
    </source>
</evidence>
<reference key="1">
    <citation type="journal article" date="2007" name="Microbiology">
        <title>Comparative analysis of the Corynebacterium glutamicum group and complete genome sequence of strain R.</title>
        <authorList>
            <person name="Yukawa H."/>
            <person name="Omumasaba C.A."/>
            <person name="Nonaka H."/>
            <person name="Kos P."/>
            <person name="Okai N."/>
            <person name="Suzuki N."/>
            <person name="Suda M."/>
            <person name="Tsuge Y."/>
            <person name="Watanabe J."/>
            <person name="Ikeda Y."/>
            <person name="Vertes A.A."/>
            <person name="Inui M."/>
        </authorList>
    </citation>
    <scope>NUCLEOTIDE SEQUENCE [LARGE SCALE GENOMIC DNA]</scope>
    <source>
        <strain>R</strain>
    </source>
</reference>
<keyword id="KW-0067">ATP-binding</keyword>
<keyword id="KW-0319">Glycerol metabolism</keyword>
<keyword id="KW-0418">Kinase</keyword>
<keyword id="KW-0547">Nucleotide-binding</keyword>
<keyword id="KW-0808">Transferase</keyword>
<protein>
    <recommendedName>
        <fullName evidence="1">Glycerol kinase</fullName>
        <ecNumber evidence="1">2.7.1.30</ecNumber>
    </recommendedName>
    <alternativeName>
        <fullName evidence="1">ATP:glycerol 3-phosphotransferase</fullName>
    </alternativeName>
    <alternativeName>
        <fullName evidence="1">Glycerokinase</fullName>
        <shortName evidence="1">GK</shortName>
    </alternativeName>
</protein>
<sequence>MRISKANAYVAAIDQGTTSTRCIFIDAQGKVVSSASKEHRQIFPQQGWVEHDPEEIWDNIRSVVSQAMVSIDITPHEVASLGVTNQRETTVVWDKHTGEPVYNAIVWQDTRTSDICLEIAGEEGQEKWLDRTGLLINSYPSGPKIKWILDNVEGARERAEKGDLLFGTMDTWVLWNLTGGVRGDDGDDAIHVTDVTNASRTLLMDLRTQQWDPELCEALDIPMSMLPEIRPSVGEFRSVRHRGTLADVPITGVLGDQQAALFGQGGFHEGAAKNTYGTGLFLLMNTGTSLKISEHGLLSTIAYQREGSAPVYALEGSVSMGGSLVQWLRDNLQLIPNAPAIENLAREVEDNGGVHVVPAFTGLFAPRWRPDARGVITGLTRFANRKHIARAVLEANAFQTREVVDAMAKDAGKALESLRVDGAMVENDLLMQMQADFLGIDVQRLEDVETTAVGVAFAAGLGSGFFKTTDEIEKLIAVKKVWNPDMSEEERERRYAEWNRAVEHSYDQA</sequence>